<protein>
    <recommendedName>
        <fullName evidence="1">Argininosuccinate lyase</fullName>
        <shortName evidence="1">ASAL</shortName>
        <ecNumber evidence="1">4.3.2.1</ecNumber>
    </recommendedName>
    <alternativeName>
        <fullName evidence="1">Arginosuccinase</fullName>
    </alternativeName>
</protein>
<name>ARLY_SALHS</name>
<dbReference type="EC" id="4.3.2.1" evidence="1"/>
<dbReference type="EMBL" id="CP001120">
    <property type="protein sequence ID" value="ACF68834.1"/>
    <property type="molecule type" value="Genomic_DNA"/>
</dbReference>
<dbReference type="RefSeq" id="WP_001230045.1">
    <property type="nucleotide sequence ID" value="NC_011083.1"/>
</dbReference>
<dbReference type="SMR" id="B4TCQ6"/>
<dbReference type="KEGG" id="seh:SeHA_C4451"/>
<dbReference type="HOGENOM" id="CLU_027272_2_3_6"/>
<dbReference type="UniPathway" id="UPA00068">
    <property type="reaction ID" value="UER00114"/>
</dbReference>
<dbReference type="Proteomes" id="UP000001866">
    <property type="component" value="Chromosome"/>
</dbReference>
<dbReference type="GO" id="GO:0005829">
    <property type="term" value="C:cytosol"/>
    <property type="evidence" value="ECO:0007669"/>
    <property type="project" value="TreeGrafter"/>
</dbReference>
<dbReference type="GO" id="GO:0004056">
    <property type="term" value="F:argininosuccinate lyase activity"/>
    <property type="evidence" value="ECO:0007669"/>
    <property type="project" value="UniProtKB-UniRule"/>
</dbReference>
<dbReference type="GO" id="GO:0042450">
    <property type="term" value="P:arginine biosynthetic process via ornithine"/>
    <property type="evidence" value="ECO:0007669"/>
    <property type="project" value="InterPro"/>
</dbReference>
<dbReference type="GO" id="GO:0006526">
    <property type="term" value="P:L-arginine biosynthetic process"/>
    <property type="evidence" value="ECO:0007669"/>
    <property type="project" value="UniProtKB-UniRule"/>
</dbReference>
<dbReference type="CDD" id="cd01359">
    <property type="entry name" value="Argininosuccinate_lyase"/>
    <property type="match status" value="1"/>
</dbReference>
<dbReference type="FunFam" id="1.10.275.10:FF:000004">
    <property type="entry name" value="Argininosuccinate lyase"/>
    <property type="match status" value="1"/>
</dbReference>
<dbReference type="FunFam" id="1.10.40.30:FF:000001">
    <property type="entry name" value="Argininosuccinate lyase"/>
    <property type="match status" value="1"/>
</dbReference>
<dbReference type="FunFam" id="1.20.200.10:FF:000006">
    <property type="entry name" value="Argininosuccinate lyase"/>
    <property type="match status" value="1"/>
</dbReference>
<dbReference type="Gene3D" id="1.10.40.30">
    <property type="entry name" value="Fumarase/aspartase (C-terminal domain)"/>
    <property type="match status" value="1"/>
</dbReference>
<dbReference type="Gene3D" id="1.20.200.10">
    <property type="entry name" value="Fumarase/aspartase (Central domain)"/>
    <property type="match status" value="1"/>
</dbReference>
<dbReference type="Gene3D" id="1.10.275.10">
    <property type="entry name" value="Fumarase/aspartase (N-terminal domain)"/>
    <property type="match status" value="1"/>
</dbReference>
<dbReference type="HAMAP" id="MF_00006">
    <property type="entry name" value="Arg_succ_lyase"/>
    <property type="match status" value="1"/>
</dbReference>
<dbReference type="InterPro" id="IPR029419">
    <property type="entry name" value="Arg_succ_lyase_C"/>
</dbReference>
<dbReference type="InterPro" id="IPR009049">
    <property type="entry name" value="Argininosuccinate_lyase"/>
</dbReference>
<dbReference type="InterPro" id="IPR024083">
    <property type="entry name" value="Fumarase/histidase_N"/>
</dbReference>
<dbReference type="InterPro" id="IPR020557">
    <property type="entry name" value="Fumarate_lyase_CS"/>
</dbReference>
<dbReference type="InterPro" id="IPR000362">
    <property type="entry name" value="Fumarate_lyase_fam"/>
</dbReference>
<dbReference type="InterPro" id="IPR022761">
    <property type="entry name" value="Fumarate_lyase_N"/>
</dbReference>
<dbReference type="InterPro" id="IPR008948">
    <property type="entry name" value="L-Aspartase-like"/>
</dbReference>
<dbReference type="NCBIfam" id="TIGR00838">
    <property type="entry name" value="argH"/>
    <property type="match status" value="1"/>
</dbReference>
<dbReference type="NCBIfam" id="NF008964">
    <property type="entry name" value="PRK12308.1"/>
    <property type="match status" value="1"/>
</dbReference>
<dbReference type="PANTHER" id="PTHR43814">
    <property type="entry name" value="ARGININOSUCCINATE LYASE"/>
    <property type="match status" value="1"/>
</dbReference>
<dbReference type="PANTHER" id="PTHR43814:SF1">
    <property type="entry name" value="ARGININOSUCCINATE LYASE"/>
    <property type="match status" value="1"/>
</dbReference>
<dbReference type="Pfam" id="PF14698">
    <property type="entry name" value="ASL_C2"/>
    <property type="match status" value="1"/>
</dbReference>
<dbReference type="Pfam" id="PF00206">
    <property type="entry name" value="Lyase_1"/>
    <property type="match status" value="1"/>
</dbReference>
<dbReference type="PRINTS" id="PR00145">
    <property type="entry name" value="ARGSUCLYASE"/>
</dbReference>
<dbReference type="PRINTS" id="PR00149">
    <property type="entry name" value="FUMRATELYASE"/>
</dbReference>
<dbReference type="SUPFAM" id="SSF48557">
    <property type="entry name" value="L-aspartase-like"/>
    <property type="match status" value="1"/>
</dbReference>
<dbReference type="PROSITE" id="PS00163">
    <property type="entry name" value="FUMARATE_LYASES"/>
    <property type="match status" value="1"/>
</dbReference>
<gene>
    <name evidence="1" type="primary">argH</name>
    <name type="ordered locus">SeHA_C4451</name>
</gene>
<evidence type="ECO:0000255" key="1">
    <source>
        <dbReference type="HAMAP-Rule" id="MF_00006"/>
    </source>
</evidence>
<proteinExistence type="inferred from homology"/>
<organism>
    <name type="scientific">Salmonella heidelberg (strain SL476)</name>
    <dbReference type="NCBI Taxonomy" id="454169"/>
    <lineage>
        <taxon>Bacteria</taxon>
        <taxon>Pseudomonadati</taxon>
        <taxon>Pseudomonadota</taxon>
        <taxon>Gammaproteobacteria</taxon>
        <taxon>Enterobacterales</taxon>
        <taxon>Enterobacteriaceae</taxon>
        <taxon>Salmonella</taxon>
    </lineage>
</organism>
<feature type="chain" id="PRO_1000089113" description="Argininosuccinate lyase">
    <location>
        <begin position="1"/>
        <end position="458"/>
    </location>
</feature>
<comment type="catalytic activity">
    <reaction evidence="1">
        <text>2-(N(omega)-L-arginino)succinate = fumarate + L-arginine</text>
        <dbReference type="Rhea" id="RHEA:24020"/>
        <dbReference type="ChEBI" id="CHEBI:29806"/>
        <dbReference type="ChEBI" id="CHEBI:32682"/>
        <dbReference type="ChEBI" id="CHEBI:57472"/>
        <dbReference type="EC" id="4.3.2.1"/>
    </reaction>
</comment>
<comment type="pathway">
    <text evidence="1">Amino-acid biosynthesis; L-arginine biosynthesis; L-arginine from L-ornithine and carbamoyl phosphate: step 3/3.</text>
</comment>
<comment type="subcellular location">
    <subcellularLocation>
        <location evidence="1">Cytoplasm</location>
    </subcellularLocation>
</comment>
<comment type="similarity">
    <text evidence="1">Belongs to the lyase 1 family. Argininosuccinate lyase subfamily.</text>
</comment>
<accession>B4TCQ6</accession>
<reference key="1">
    <citation type="journal article" date="2011" name="J. Bacteriol.">
        <title>Comparative genomics of 28 Salmonella enterica isolates: evidence for CRISPR-mediated adaptive sublineage evolution.</title>
        <authorList>
            <person name="Fricke W.F."/>
            <person name="Mammel M.K."/>
            <person name="McDermott P.F."/>
            <person name="Tartera C."/>
            <person name="White D.G."/>
            <person name="Leclerc J.E."/>
            <person name="Ravel J."/>
            <person name="Cebula T.A."/>
        </authorList>
    </citation>
    <scope>NUCLEOTIDE SEQUENCE [LARGE SCALE GENOMIC DNA]</scope>
    <source>
        <strain>SL476</strain>
    </source>
</reference>
<keyword id="KW-0028">Amino-acid biosynthesis</keyword>
<keyword id="KW-0055">Arginine biosynthesis</keyword>
<keyword id="KW-0963">Cytoplasm</keyword>
<keyword id="KW-0456">Lyase</keyword>
<sequence>MALWGGRFTQAADQRFKQFNDSLRFDYRLAEQDIVGSVAWSKALVTVGVLTADEQRQLEEALNVLLEEVRANPQQILQSDAEDIHSWVEGKLIDKVGQLGKKLHTGRSRNDQVATDLKLWCKETVRELLTANRQLQSALVETAQANQDAVMPGYTHLQRAQPVTFAHWCLAYVEMLARDESRLQDTLKRLDVSPLGCGALAGTAYEIDREQLAGWLGFASATRNSLDSVSDRDHVLELLSDAAIGMVHLSRFAEDLIFFNSGEAGFVELSDRVTSGSSLMPQKKNPDALELIRGKCGRVQGALTGMMMTLKGLPLAYNKDMQEDKEGLFDALDTWLDCLHMAALVLDGIQVKRPRCQDAAQQGYANATELADYLVAKGVPFREAHHIVGEAVVEAIRQGKPLEALPLADLQKFSHVIGDDVYPMLSLQSCLDKRAAKGGVSPQQVAQAINDAKARLAL</sequence>